<name>MT2_CRIGR</name>
<protein>
    <recommendedName>
        <fullName>Metallothionein-2</fullName>
        <shortName>MT-2</shortName>
    </recommendedName>
    <alternativeName>
        <fullName>Metallothionein-II</fullName>
        <shortName>MT-II</shortName>
    </alternativeName>
</protein>
<accession>P67981</accession>
<accession>P02799</accession>
<sequence length="61" mass="6146">MDPNCSCATDGSCSCAGSCKCKECKCTTCKKSCCSCCPVGCAKCSQGCVCKEASDKCSCCA</sequence>
<proteinExistence type="inferred from homology"/>
<keyword id="KW-0007">Acetylation</keyword>
<keyword id="KW-0479">Metal-binding</keyword>
<keyword id="KW-0480">Metal-thiolate cluster</keyword>
<keyword id="KW-0597">Phosphoprotein</keyword>
<comment type="function">
    <text>Metallothioneins have a high content of cysteine residues that bind various heavy metals; these proteins are transcriptionally regulated by both heavy metals and glucocorticoids.</text>
</comment>
<comment type="domain">
    <text>Class I metallothioneins contain 2 metal-binding domains: four divalent ions are chelated within cluster A of the alpha domain and are coordinated via cysteinyl thiolate bridges to 11 cysteine ligands. Cluster B, the corresponding region within the beta domain, can ligate three divalent ions to 9 cysteines.</text>
</comment>
<comment type="similarity">
    <text evidence="3">Belongs to the metallothionein superfamily. Type 1 family.</text>
</comment>
<gene>
    <name type="primary">MT2</name>
</gene>
<feature type="chain" id="PRO_0000197201" description="Metallothionein-2">
    <location>
        <begin position="1"/>
        <end position="61"/>
    </location>
</feature>
<feature type="region of interest" description="Beta">
    <location>
        <begin position="1"/>
        <end position="29"/>
    </location>
</feature>
<feature type="region of interest" description="Alpha">
    <location>
        <begin position="30"/>
        <end position="61"/>
    </location>
</feature>
<feature type="binding site" evidence="1">
    <location>
        <position position="5"/>
    </location>
    <ligand>
        <name>a divalent metal cation</name>
        <dbReference type="ChEBI" id="CHEBI:60240"/>
        <label>1</label>
        <note>in cluster B</note>
    </ligand>
</feature>
<feature type="binding site" evidence="1">
    <location>
        <position position="7"/>
    </location>
    <ligand>
        <name>a divalent metal cation</name>
        <dbReference type="ChEBI" id="CHEBI:60240"/>
        <label>1</label>
        <note>in cluster B</note>
    </ligand>
</feature>
<feature type="binding site" evidence="1">
    <location>
        <position position="7"/>
    </location>
    <ligand>
        <name>a divalent metal cation</name>
        <dbReference type="ChEBI" id="CHEBI:60240"/>
        <label>2</label>
        <note>in cluster B</note>
    </ligand>
</feature>
<feature type="binding site" evidence="1">
    <location>
        <position position="13"/>
    </location>
    <ligand>
        <name>a divalent metal cation</name>
        <dbReference type="ChEBI" id="CHEBI:60240"/>
        <label>2</label>
        <note>in cluster B</note>
    </ligand>
</feature>
<feature type="binding site" evidence="1">
    <location>
        <position position="15"/>
    </location>
    <ligand>
        <name>a divalent metal cation</name>
        <dbReference type="ChEBI" id="CHEBI:60240"/>
        <label>2</label>
        <note>in cluster B</note>
    </ligand>
</feature>
<feature type="binding site" evidence="1">
    <location>
        <position position="15"/>
    </location>
    <ligand>
        <name>a divalent metal cation</name>
        <dbReference type="ChEBI" id="CHEBI:60240"/>
        <label>3</label>
        <note>in cluster B</note>
    </ligand>
</feature>
<feature type="binding site" evidence="1">
    <location>
        <position position="19"/>
    </location>
    <ligand>
        <name>a divalent metal cation</name>
        <dbReference type="ChEBI" id="CHEBI:60240"/>
        <label>3</label>
        <note>in cluster B</note>
    </ligand>
</feature>
<feature type="binding site" evidence="1">
    <location>
        <position position="21"/>
    </location>
    <ligand>
        <name>a divalent metal cation</name>
        <dbReference type="ChEBI" id="CHEBI:60240"/>
        <label>1</label>
        <note>in cluster B</note>
    </ligand>
</feature>
<feature type="binding site" evidence="1">
    <location>
        <position position="24"/>
    </location>
    <ligand>
        <name>a divalent metal cation</name>
        <dbReference type="ChEBI" id="CHEBI:60240"/>
        <label>1</label>
        <note>in cluster B</note>
    </ligand>
</feature>
<feature type="binding site" evidence="1">
    <location>
        <position position="24"/>
    </location>
    <ligand>
        <name>a divalent metal cation</name>
        <dbReference type="ChEBI" id="CHEBI:60240"/>
        <label>3</label>
        <note>in cluster B</note>
    </ligand>
</feature>
<feature type="binding site" evidence="1">
    <location>
        <position position="26"/>
    </location>
    <ligand>
        <name>a divalent metal cation</name>
        <dbReference type="ChEBI" id="CHEBI:60240"/>
        <label>2</label>
        <note>in cluster B</note>
    </ligand>
</feature>
<feature type="binding site" evidence="1">
    <location>
        <position position="29"/>
    </location>
    <ligand>
        <name>a divalent metal cation</name>
        <dbReference type="ChEBI" id="CHEBI:60240"/>
        <label>3</label>
        <note>in cluster B</note>
    </ligand>
</feature>
<feature type="binding site" evidence="1">
    <location>
        <position position="33"/>
    </location>
    <ligand>
        <name>a divalent metal cation</name>
        <dbReference type="ChEBI" id="CHEBI:60240"/>
        <label>4</label>
        <note>in cluster A</note>
    </ligand>
</feature>
<feature type="binding site" evidence="1">
    <location>
        <position position="34"/>
    </location>
    <ligand>
        <name>a divalent metal cation</name>
        <dbReference type="ChEBI" id="CHEBI:60240"/>
        <label>4</label>
        <note>in cluster A</note>
    </ligand>
</feature>
<feature type="binding site" evidence="1">
    <location>
        <position position="34"/>
    </location>
    <ligand>
        <name>a divalent metal cation</name>
        <dbReference type="ChEBI" id="CHEBI:60240"/>
        <label>5</label>
        <note>in cluster A</note>
    </ligand>
</feature>
<feature type="binding site" evidence="1">
    <location>
        <position position="36"/>
    </location>
    <ligand>
        <name>a divalent metal cation</name>
        <dbReference type="ChEBI" id="CHEBI:60240"/>
        <label>5</label>
        <note>in cluster A</note>
    </ligand>
</feature>
<feature type="binding site" evidence="1">
    <location>
        <position position="37"/>
    </location>
    <ligand>
        <name>a divalent metal cation</name>
        <dbReference type="ChEBI" id="CHEBI:60240"/>
        <label>5</label>
        <note>in cluster A</note>
    </ligand>
</feature>
<feature type="binding site" evidence="1">
    <location>
        <position position="37"/>
    </location>
    <ligand>
        <name>a divalent metal cation</name>
        <dbReference type="ChEBI" id="CHEBI:60240"/>
        <label>6</label>
        <note>in cluster A</note>
    </ligand>
</feature>
<feature type="binding site" evidence="1">
    <location>
        <position position="41"/>
    </location>
    <ligand>
        <name>a divalent metal cation</name>
        <dbReference type="ChEBI" id="CHEBI:60240"/>
        <label>6</label>
        <note>in cluster A</note>
    </ligand>
</feature>
<feature type="binding site" evidence="1">
    <location>
        <position position="44"/>
    </location>
    <ligand>
        <name>a divalent metal cation</name>
        <dbReference type="ChEBI" id="CHEBI:60240"/>
        <label>4</label>
        <note>in cluster A</note>
    </ligand>
</feature>
<feature type="binding site" evidence="1">
    <location>
        <position position="44"/>
    </location>
    <ligand>
        <name>a divalent metal cation</name>
        <dbReference type="ChEBI" id="CHEBI:60240"/>
        <label>6</label>
        <note>in cluster A</note>
    </ligand>
</feature>
<feature type="binding site" evidence="1">
    <location>
        <position position="48"/>
    </location>
    <ligand>
        <name>a divalent metal cation</name>
        <dbReference type="ChEBI" id="CHEBI:60240"/>
        <label>4</label>
        <note>in cluster A</note>
    </ligand>
</feature>
<feature type="binding site" evidence="1">
    <location>
        <position position="50"/>
    </location>
    <ligand>
        <name>a divalent metal cation</name>
        <dbReference type="ChEBI" id="CHEBI:60240"/>
        <label>5</label>
        <note>in cluster A</note>
    </ligand>
</feature>
<feature type="binding site" evidence="1">
    <location>
        <position position="50"/>
    </location>
    <ligand>
        <name>a divalent metal cation</name>
        <dbReference type="ChEBI" id="CHEBI:60240"/>
        <label>7</label>
        <note>in cluster A</note>
    </ligand>
</feature>
<feature type="binding site" evidence="1">
    <location>
        <position position="57"/>
    </location>
    <ligand>
        <name>a divalent metal cation</name>
        <dbReference type="ChEBI" id="CHEBI:60240"/>
        <label>7</label>
        <note>in cluster A</note>
    </ligand>
</feature>
<feature type="binding site" evidence="1">
    <location>
        <position position="59"/>
    </location>
    <ligand>
        <name>a divalent metal cation</name>
        <dbReference type="ChEBI" id="CHEBI:60240"/>
        <label>7</label>
        <note>in cluster A</note>
    </ligand>
</feature>
<feature type="binding site" evidence="1">
    <location>
        <position position="60"/>
    </location>
    <ligand>
        <name>a divalent metal cation</name>
        <dbReference type="ChEBI" id="CHEBI:60240"/>
        <label>6</label>
        <note>in cluster A</note>
    </ligand>
</feature>
<feature type="binding site" evidence="1">
    <location>
        <position position="60"/>
    </location>
    <ligand>
        <name>a divalent metal cation</name>
        <dbReference type="ChEBI" id="CHEBI:60240"/>
        <label>7</label>
        <note>in cluster A</note>
    </ligand>
</feature>
<feature type="modified residue" description="N-acetylmethionine" evidence="2">
    <location>
        <position position="1"/>
    </location>
</feature>
<feature type="modified residue" description="Phosphoserine" evidence="1">
    <location>
        <position position="58"/>
    </location>
</feature>
<reference key="1">
    <citation type="journal article" date="1983" name="Nucleic Acids Res.">
        <title>cDNA cloning and nucleotide sequence comparison of Chinese hamster metallothionein I and II mRNAs.</title>
        <authorList>
            <person name="Griffith B.B."/>
            <person name="Walters R.A."/>
            <person name="Enger M.D."/>
            <person name="Hildebrand C.E."/>
            <person name="Griffith J.K."/>
        </authorList>
    </citation>
    <scope>NUCLEOTIDE SEQUENCE [MRNA]</scope>
</reference>
<reference key="2">
    <citation type="journal article" date="1991" name="Biochim. Biophys. Acta">
        <title>Molecular cloning of Chinese hamster metallothionein II gene and its 5' flanking region.</title>
        <authorList>
            <person name="Hung S.H."/>
            <person name="Yu C.W."/>
            <person name="Chou T.M."/>
            <person name="Huang P.C."/>
            <person name="Lin L.Y."/>
        </authorList>
    </citation>
    <scope>NUCLEOTIDE SEQUENCE</scope>
</reference>
<reference key="3">
    <citation type="journal article" date="1994" name="Biochim. Biophys. Acta">
        <title>Sequence homology of Chinese hamster metallothionein genes I and II to those of the mouse and rat, and their amplification in Cd-resistant cells.</title>
        <authorList>
            <person name="Yamada K."/>
            <person name="Kato H."/>
            <person name="Kanda N."/>
            <person name="Fujii-Kuriyama Y."/>
            <person name="Utakoji T."/>
            <person name="Itoh R."/>
        </authorList>
    </citation>
    <scope>NUCLEOTIDE SEQUENCE [GENOMIC DNA]</scope>
    <source>
        <tissue>Lung</tissue>
    </source>
</reference>
<reference key="4">
    <citation type="submission" date="1990-10" db="EMBL/GenBank/DDBJ databases">
        <title>Splicing patterns of the Chinese hamster metallothionein II gene transcript.</title>
        <authorList>
            <person name="Grady D.L."/>
            <person name="Hildebrand C.E."/>
            <person name="Jackson P.J."/>
            <person name="Walters R.A."/>
            <person name="Moyzis R.K."/>
        </authorList>
    </citation>
    <scope>NUCLEOTIDE SEQUENCE</scope>
</reference>
<organism>
    <name type="scientific">Cricetulus griseus</name>
    <name type="common">Chinese hamster</name>
    <name type="synonym">Cricetulus barabensis griseus</name>
    <dbReference type="NCBI Taxonomy" id="10029"/>
    <lineage>
        <taxon>Eukaryota</taxon>
        <taxon>Metazoa</taxon>
        <taxon>Chordata</taxon>
        <taxon>Craniata</taxon>
        <taxon>Vertebrata</taxon>
        <taxon>Euteleostomi</taxon>
        <taxon>Mammalia</taxon>
        <taxon>Eutheria</taxon>
        <taxon>Euarchontoglires</taxon>
        <taxon>Glires</taxon>
        <taxon>Rodentia</taxon>
        <taxon>Myomorpha</taxon>
        <taxon>Muroidea</taxon>
        <taxon>Cricetidae</taxon>
        <taxon>Cricetinae</taxon>
        <taxon>Cricetulus</taxon>
    </lineage>
</organism>
<dbReference type="EMBL" id="J00062">
    <property type="protein sequence ID" value="AAA36997.1"/>
    <property type="molecule type" value="mRNA"/>
</dbReference>
<dbReference type="EMBL" id="M81319">
    <property type="protein sequence ID" value="AAA73166.1"/>
    <property type="molecule type" value="Genomic_DNA"/>
</dbReference>
<dbReference type="EMBL" id="D10552">
    <property type="protein sequence ID" value="BAA01409.1"/>
    <property type="molecule type" value="Genomic_DNA"/>
</dbReference>
<dbReference type="EMBL" id="X55065">
    <property type="protein sequence ID" value="CAA38898.1"/>
    <property type="molecule type" value="Genomic_DNA"/>
</dbReference>
<dbReference type="PIR" id="A03276">
    <property type="entry name" value="SMHY2C"/>
</dbReference>
<dbReference type="RefSeq" id="NP_001231506.1">
    <property type="nucleotide sequence ID" value="NM_001244577.1"/>
</dbReference>
<dbReference type="SMR" id="P67981"/>
<dbReference type="PaxDb" id="10029-NP_001231506.1"/>
<dbReference type="Ensembl" id="ENSCGRT00001028207.1">
    <property type="protein sequence ID" value="ENSCGRP00001023961.1"/>
    <property type="gene ID" value="ENSCGRG00001022033.1"/>
</dbReference>
<dbReference type="GeneID" id="100689479"/>
<dbReference type="KEGG" id="cge:100689479"/>
<dbReference type="CTD" id="17750"/>
<dbReference type="eggNOG" id="KOG4738">
    <property type="taxonomic scope" value="Eukaryota"/>
</dbReference>
<dbReference type="GeneTree" id="ENSGT00950000182967"/>
<dbReference type="OMA" id="KECKCSS"/>
<dbReference type="Proteomes" id="UP000694386">
    <property type="component" value="Unplaced"/>
</dbReference>
<dbReference type="Proteomes" id="UP001108280">
    <property type="component" value="Chromosome 3"/>
</dbReference>
<dbReference type="GO" id="GO:0005737">
    <property type="term" value="C:cytoplasm"/>
    <property type="evidence" value="ECO:0000250"/>
    <property type="project" value="UniProtKB"/>
</dbReference>
<dbReference type="GO" id="GO:0005634">
    <property type="term" value="C:nucleus"/>
    <property type="evidence" value="ECO:0000250"/>
    <property type="project" value="UniProtKB"/>
</dbReference>
<dbReference type="GO" id="GO:0008270">
    <property type="term" value="F:zinc ion binding"/>
    <property type="evidence" value="ECO:0000250"/>
    <property type="project" value="UniProtKB"/>
</dbReference>
<dbReference type="GO" id="GO:0071276">
    <property type="term" value="P:cellular response to cadmium ion"/>
    <property type="evidence" value="ECO:0007669"/>
    <property type="project" value="TreeGrafter"/>
</dbReference>
<dbReference type="GO" id="GO:0071280">
    <property type="term" value="P:cellular response to copper ion"/>
    <property type="evidence" value="ECO:0007669"/>
    <property type="project" value="TreeGrafter"/>
</dbReference>
<dbReference type="GO" id="GO:0071294">
    <property type="term" value="P:cellular response to zinc ion"/>
    <property type="evidence" value="ECO:0000250"/>
    <property type="project" value="UniProtKB"/>
</dbReference>
<dbReference type="GO" id="GO:0010273">
    <property type="term" value="P:detoxification of copper ion"/>
    <property type="evidence" value="ECO:0007669"/>
    <property type="project" value="Ensembl"/>
</dbReference>
<dbReference type="GO" id="GO:0006882">
    <property type="term" value="P:intracellular zinc ion homeostasis"/>
    <property type="evidence" value="ECO:0007669"/>
    <property type="project" value="Ensembl"/>
</dbReference>
<dbReference type="GO" id="GO:0045926">
    <property type="term" value="P:negative regulation of growth"/>
    <property type="evidence" value="ECO:0000250"/>
    <property type="project" value="UniProtKB"/>
</dbReference>
<dbReference type="GO" id="GO:0007263">
    <property type="term" value="P:nitric oxide mediated signal transduction"/>
    <property type="evidence" value="ECO:0007669"/>
    <property type="project" value="Ensembl"/>
</dbReference>
<dbReference type="GO" id="GO:0009617">
    <property type="term" value="P:response to bacterium"/>
    <property type="evidence" value="ECO:0007669"/>
    <property type="project" value="Ensembl"/>
</dbReference>
<dbReference type="FunFam" id="4.10.10.10:FF:000001">
    <property type="entry name" value="Metallothionein"/>
    <property type="match status" value="1"/>
</dbReference>
<dbReference type="Gene3D" id="4.10.10.10">
    <property type="entry name" value="Metallothionein Isoform II"/>
    <property type="match status" value="1"/>
</dbReference>
<dbReference type="InterPro" id="IPR017854">
    <property type="entry name" value="Metalthion_dom_sf"/>
</dbReference>
<dbReference type="InterPro" id="IPR023587">
    <property type="entry name" value="Metalthion_dom_sf_vert"/>
</dbReference>
<dbReference type="InterPro" id="IPR000006">
    <property type="entry name" value="Metalthion_vert"/>
</dbReference>
<dbReference type="InterPro" id="IPR018064">
    <property type="entry name" value="Metalthion_vert_metal_BS"/>
</dbReference>
<dbReference type="PANTHER" id="PTHR23299">
    <property type="entry name" value="METALLOTHIONEIN"/>
    <property type="match status" value="1"/>
</dbReference>
<dbReference type="PANTHER" id="PTHR23299:SF22">
    <property type="entry name" value="METALLOTHIONEIN-1G"/>
    <property type="match status" value="1"/>
</dbReference>
<dbReference type="Pfam" id="PF00131">
    <property type="entry name" value="Metallothio"/>
    <property type="match status" value="1"/>
</dbReference>
<dbReference type="PRINTS" id="PR00860">
    <property type="entry name" value="MTVERTEBRATE"/>
</dbReference>
<dbReference type="SUPFAM" id="SSF57868">
    <property type="entry name" value="Metallothionein"/>
    <property type="match status" value="1"/>
</dbReference>
<dbReference type="PROSITE" id="PS00203">
    <property type="entry name" value="METALLOTHIONEIN_VRT"/>
    <property type="match status" value="1"/>
</dbReference>
<evidence type="ECO:0000250" key="1">
    <source>
        <dbReference type="UniProtKB" id="P02795"/>
    </source>
</evidence>
<evidence type="ECO:0000250" key="2">
    <source>
        <dbReference type="UniProtKB" id="P68301"/>
    </source>
</evidence>
<evidence type="ECO:0000305" key="3"/>